<sequence length="186" mass="19944">MPNEFELAVAALQRDGVIAYATEAVFGLGCDPDSESAVHRLLAIKQRPVEKGLILIAADLAQLQDYIDLDQLTSEQLARVEASWPGPFTWIMPARSNTPAWLTGQFTTLAVRVTAHPQVQALCRAFGKPLVSTSANLTGEEPARRVADIGELLASQLAYILPGEVGGQANPSEIKDARTGAIIRPS</sequence>
<gene>
    <name evidence="1" type="primary">tsaC</name>
    <name type="synonym">rimN</name>
    <name type="ordered locus">AHA_0264</name>
</gene>
<keyword id="KW-0067">ATP-binding</keyword>
<keyword id="KW-0963">Cytoplasm</keyword>
<keyword id="KW-0547">Nucleotide-binding</keyword>
<keyword id="KW-0548">Nucleotidyltransferase</keyword>
<keyword id="KW-1185">Reference proteome</keyword>
<keyword id="KW-0808">Transferase</keyword>
<keyword id="KW-0819">tRNA processing</keyword>
<accession>A0KEX6</accession>
<evidence type="ECO:0000255" key="1">
    <source>
        <dbReference type="HAMAP-Rule" id="MF_01852"/>
    </source>
</evidence>
<reference key="1">
    <citation type="journal article" date="2006" name="J. Bacteriol.">
        <title>Genome sequence of Aeromonas hydrophila ATCC 7966T: jack of all trades.</title>
        <authorList>
            <person name="Seshadri R."/>
            <person name="Joseph S.W."/>
            <person name="Chopra A.K."/>
            <person name="Sha J."/>
            <person name="Shaw J."/>
            <person name="Graf J."/>
            <person name="Haft D.H."/>
            <person name="Wu M."/>
            <person name="Ren Q."/>
            <person name="Rosovitz M.J."/>
            <person name="Madupu R."/>
            <person name="Tallon L."/>
            <person name="Kim M."/>
            <person name="Jin S."/>
            <person name="Vuong H."/>
            <person name="Stine O.C."/>
            <person name="Ali A."/>
            <person name="Horneman A.J."/>
            <person name="Heidelberg J.F."/>
        </authorList>
    </citation>
    <scope>NUCLEOTIDE SEQUENCE [LARGE SCALE GENOMIC DNA]</scope>
    <source>
        <strain>ATCC 7966 / DSM 30187 / BCRC 13018 / CCUG 14551 / JCM 1027 / KCTC 2358 / NCIMB 9240 / NCTC 8049</strain>
    </source>
</reference>
<name>TSAC_AERHH</name>
<protein>
    <recommendedName>
        <fullName evidence="1">Threonylcarbamoyl-AMP synthase</fullName>
        <shortName evidence="1">TC-AMP synthase</shortName>
        <ecNumber evidence="1">2.7.7.87</ecNumber>
    </recommendedName>
    <alternativeName>
        <fullName evidence="1">L-threonylcarbamoyladenylate synthase</fullName>
    </alternativeName>
    <alternativeName>
        <fullName evidence="1">t(6)A37 threonylcarbamoyladenosine biosynthesis protein TsaC</fullName>
    </alternativeName>
    <alternativeName>
        <fullName evidence="1">tRNA threonylcarbamoyladenosine biosynthesis protein TsaC</fullName>
    </alternativeName>
</protein>
<organism>
    <name type="scientific">Aeromonas hydrophila subsp. hydrophila (strain ATCC 7966 / DSM 30187 / BCRC 13018 / CCUG 14551 / JCM 1027 / KCTC 2358 / NCIMB 9240 / NCTC 8049)</name>
    <dbReference type="NCBI Taxonomy" id="380703"/>
    <lineage>
        <taxon>Bacteria</taxon>
        <taxon>Pseudomonadati</taxon>
        <taxon>Pseudomonadota</taxon>
        <taxon>Gammaproteobacteria</taxon>
        <taxon>Aeromonadales</taxon>
        <taxon>Aeromonadaceae</taxon>
        <taxon>Aeromonas</taxon>
    </lineage>
</organism>
<dbReference type="EC" id="2.7.7.87" evidence="1"/>
<dbReference type="EMBL" id="CP000462">
    <property type="protein sequence ID" value="ABK37578.1"/>
    <property type="molecule type" value="Genomic_DNA"/>
</dbReference>
<dbReference type="RefSeq" id="WP_011704272.1">
    <property type="nucleotide sequence ID" value="NC_008570.1"/>
</dbReference>
<dbReference type="RefSeq" id="YP_854792.1">
    <property type="nucleotide sequence ID" value="NC_008570.1"/>
</dbReference>
<dbReference type="SMR" id="A0KEX6"/>
<dbReference type="STRING" id="380703.AHA_0264"/>
<dbReference type="EnsemblBacteria" id="ABK37578">
    <property type="protein sequence ID" value="ABK37578"/>
    <property type="gene ID" value="AHA_0264"/>
</dbReference>
<dbReference type="GeneID" id="4490195"/>
<dbReference type="KEGG" id="aha:AHA_0264"/>
<dbReference type="PATRIC" id="fig|380703.7.peg.251"/>
<dbReference type="eggNOG" id="COG0009">
    <property type="taxonomic scope" value="Bacteria"/>
</dbReference>
<dbReference type="HOGENOM" id="CLU_031397_6_0_6"/>
<dbReference type="OrthoDB" id="9814580at2"/>
<dbReference type="Proteomes" id="UP000000756">
    <property type="component" value="Chromosome"/>
</dbReference>
<dbReference type="GO" id="GO:0005737">
    <property type="term" value="C:cytoplasm"/>
    <property type="evidence" value="ECO:0007669"/>
    <property type="project" value="UniProtKB-SubCell"/>
</dbReference>
<dbReference type="GO" id="GO:0005524">
    <property type="term" value="F:ATP binding"/>
    <property type="evidence" value="ECO:0007669"/>
    <property type="project" value="UniProtKB-UniRule"/>
</dbReference>
<dbReference type="GO" id="GO:0003725">
    <property type="term" value="F:double-stranded RNA binding"/>
    <property type="evidence" value="ECO:0007669"/>
    <property type="project" value="InterPro"/>
</dbReference>
<dbReference type="GO" id="GO:0061710">
    <property type="term" value="F:L-threonylcarbamoyladenylate synthase"/>
    <property type="evidence" value="ECO:0007669"/>
    <property type="project" value="UniProtKB-EC"/>
</dbReference>
<dbReference type="GO" id="GO:0000049">
    <property type="term" value="F:tRNA binding"/>
    <property type="evidence" value="ECO:0007669"/>
    <property type="project" value="TreeGrafter"/>
</dbReference>
<dbReference type="GO" id="GO:0006450">
    <property type="term" value="P:regulation of translational fidelity"/>
    <property type="evidence" value="ECO:0007669"/>
    <property type="project" value="TreeGrafter"/>
</dbReference>
<dbReference type="GO" id="GO:0002949">
    <property type="term" value="P:tRNA threonylcarbamoyladenosine modification"/>
    <property type="evidence" value="ECO:0007669"/>
    <property type="project" value="UniProtKB-UniRule"/>
</dbReference>
<dbReference type="FunFam" id="3.90.870.10:FF:000004">
    <property type="entry name" value="Threonylcarbamoyl-AMP synthase"/>
    <property type="match status" value="1"/>
</dbReference>
<dbReference type="Gene3D" id="3.90.870.10">
    <property type="entry name" value="DHBP synthase"/>
    <property type="match status" value="1"/>
</dbReference>
<dbReference type="HAMAP" id="MF_01852">
    <property type="entry name" value="TsaC"/>
    <property type="match status" value="1"/>
</dbReference>
<dbReference type="InterPro" id="IPR017945">
    <property type="entry name" value="DHBP_synth_RibB-like_a/b_dom"/>
</dbReference>
<dbReference type="InterPro" id="IPR006070">
    <property type="entry name" value="Sua5-like_dom"/>
</dbReference>
<dbReference type="InterPro" id="IPR023535">
    <property type="entry name" value="TC-AMP_synthase"/>
</dbReference>
<dbReference type="InterPro" id="IPR050156">
    <property type="entry name" value="TC-AMP_synthase_SUA5"/>
</dbReference>
<dbReference type="PANTHER" id="PTHR17490">
    <property type="entry name" value="SUA5"/>
    <property type="match status" value="1"/>
</dbReference>
<dbReference type="PANTHER" id="PTHR17490:SF18">
    <property type="entry name" value="THREONYLCARBAMOYL-AMP SYNTHASE"/>
    <property type="match status" value="1"/>
</dbReference>
<dbReference type="Pfam" id="PF01300">
    <property type="entry name" value="Sua5_yciO_yrdC"/>
    <property type="match status" value="1"/>
</dbReference>
<dbReference type="SUPFAM" id="SSF55821">
    <property type="entry name" value="YrdC/RibB"/>
    <property type="match status" value="1"/>
</dbReference>
<dbReference type="PROSITE" id="PS51163">
    <property type="entry name" value="YRDC"/>
    <property type="match status" value="1"/>
</dbReference>
<feature type="chain" id="PRO_0000352895" description="Threonylcarbamoyl-AMP synthase">
    <location>
        <begin position="1"/>
        <end position="186"/>
    </location>
</feature>
<feature type="domain" description="YrdC-like" evidence="1">
    <location>
        <begin position="2"/>
        <end position="186"/>
    </location>
</feature>
<comment type="function">
    <text evidence="1">Required for the formation of a threonylcarbamoyl group on adenosine at position 37 (t(6)A37) in tRNAs that read codons beginning with adenine. Catalyzes the conversion of L-threonine, HCO(3)(-)/CO(2) and ATP to give threonylcarbamoyl-AMP (TC-AMP) as the acyladenylate intermediate, with the release of diphosphate.</text>
</comment>
<comment type="catalytic activity">
    <reaction evidence="1">
        <text>L-threonine + hydrogencarbonate + ATP = L-threonylcarbamoyladenylate + diphosphate + H2O</text>
        <dbReference type="Rhea" id="RHEA:36407"/>
        <dbReference type="ChEBI" id="CHEBI:15377"/>
        <dbReference type="ChEBI" id="CHEBI:17544"/>
        <dbReference type="ChEBI" id="CHEBI:30616"/>
        <dbReference type="ChEBI" id="CHEBI:33019"/>
        <dbReference type="ChEBI" id="CHEBI:57926"/>
        <dbReference type="ChEBI" id="CHEBI:73682"/>
        <dbReference type="EC" id="2.7.7.87"/>
    </reaction>
</comment>
<comment type="subcellular location">
    <subcellularLocation>
        <location evidence="1">Cytoplasm</location>
    </subcellularLocation>
</comment>
<comment type="similarity">
    <text evidence="1">Belongs to the SUA5 family. TsaC subfamily.</text>
</comment>
<proteinExistence type="inferred from homology"/>